<comment type="function">
    <text>Krueppel is a gap class segmentation protein.</text>
</comment>
<comment type="subcellular location">
    <subcellularLocation>
        <location evidence="2">Nucleus</location>
    </subcellularLocation>
</comment>
<comment type="similarity">
    <text evidence="2">Belongs to the krueppel C2H2-type zinc-finger protein family.</text>
</comment>
<evidence type="ECO:0000255" key="1">
    <source>
        <dbReference type="PROSITE-ProRule" id="PRU00042"/>
    </source>
</evidence>
<evidence type="ECO:0000305" key="2"/>
<reference key="1">
    <citation type="journal article" date="1992" name="Proc. Natl. Acad. Sci. U.S.A.">
        <title>Evolutionary conservation pattern of zinc-finger domains of Drosophila segmentation genes.</title>
        <authorList>
            <person name="Sommer R.J."/>
            <person name="Retzlaff M."/>
            <person name="Goerlich K."/>
            <person name="Sander K."/>
            <person name="Tautz D."/>
        </authorList>
    </citation>
    <scope>NUCLEOTIDE SEQUENCE [GENOMIC DNA]</scope>
</reference>
<reference key="2">
    <citation type="journal article" date="1991" name="Development">
        <title>Segmentation gene expression in the housefly Musca domestica.</title>
        <authorList>
            <person name="Sommer R.J."/>
            <person name="Tautz D."/>
        </authorList>
    </citation>
    <scope>NUCLEOTIDE SEQUENCE [GENOMIC DNA]</scope>
</reference>
<organism>
    <name type="scientific">Musca domestica</name>
    <name type="common">House fly</name>
    <dbReference type="NCBI Taxonomy" id="7370"/>
    <lineage>
        <taxon>Eukaryota</taxon>
        <taxon>Metazoa</taxon>
        <taxon>Ecdysozoa</taxon>
        <taxon>Arthropoda</taxon>
        <taxon>Hexapoda</taxon>
        <taxon>Insecta</taxon>
        <taxon>Pterygota</taxon>
        <taxon>Neoptera</taxon>
        <taxon>Endopterygota</taxon>
        <taxon>Diptera</taxon>
        <taxon>Brachycera</taxon>
        <taxon>Muscomorpha</taxon>
        <taxon>Muscoidea</taxon>
        <taxon>Muscidae</taxon>
        <taxon>Musca</taxon>
    </lineage>
</organism>
<keyword id="KW-0217">Developmental protein</keyword>
<keyword id="KW-0238">DNA-binding</keyword>
<keyword id="KW-0302">Gap protein</keyword>
<keyword id="KW-0479">Metal-binding</keyword>
<keyword id="KW-0539">Nucleus</keyword>
<keyword id="KW-1185">Reference proteome</keyword>
<keyword id="KW-0677">Repeat</keyword>
<keyword id="KW-0862">Zinc</keyword>
<keyword id="KW-0863">Zinc-finger</keyword>
<accession>Q01779</accession>
<proteinExistence type="inferred from homology"/>
<protein>
    <recommendedName>
        <fullName>Protein krueppel</fullName>
    </recommendedName>
</protein>
<feature type="chain" id="PRO_0000046998" description="Protein krueppel">
    <location>
        <begin position="1" status="less than"/>
        <end position="74" status="greater than"/>
    </location>
</feature>
<feature type="zinc finger region" description="C2H2-type 1" evidence="1">
    <location>
        <begin position="1" status="less than"/>
        <end position="4"/>
    </location>
</feature>
<feature type="zinc finger region" description="C2H2-type 2" evidence="1">
    <location>
        <begin position="10"/>
        <end position="32"/>
    </location>
</feature>
<feature type="zinc finger region" description="C2H2-type 3" evidence="1">
    <location>
        <begin position="38"/>
        <end position="60"/>
    </location>
</feature>
<feature type="zinc finger region" description="C2H2-type 4" evidence="1">
    <location>
        <begin position="66"/>
        <end position="74" status="greater than"/>
    </location>
</feature>
<feature type="non-terminal residue">
    <location>
        <position position="1"/>
    </location>
</feature>
<feature type="non-terminal residue">
    <location>
        <position position="74"/>
    </location>
</feature>
<gene>
    <name type="primary">Kr</name>
</gene>
<name>KRUP_MUSDO</name>
<sequence>ERTHTGEKPFECPECHKRFTRDHHLKTHMRLHTGEKPYHCSHCDRQFVQVANLRRHLRVHTGEKPYTCEICDGK</sequence>
<dbReference type="EMBL" id="L01602">
    <property type="protein sequence ID" value="AAA29297.1"/>
    <property type="molecule type" value="Genomic_DNA"/>
</dbReference>
<dbReference type="PIR" id="D61600">
    <property type="entry name" value="D61600"/>
</dbReference>
<dbReference type="SMR" id="Q01779"/>
<dbReference type="STRING" id="7370.Q01779"/>
<dbReference type="EnsemblMetazoa" id="MDOA007462-RA">
    <property type="protein sequence ID" value="MDOA007462-PA"/>
    <property type="gene ID" value="MDOA007462"/>
</dbReference>
<dbReference type="VEuPathDB" id="VectorBase:MDOA007462"/>
<dbReference type="VEuPathDB" id="VectorBase:MDOMA2_002389"/>
<dbReference type="eggNOG" id="KOG1721">
    <property type="taxonomic scope" value="Eukaryota"/>
</dbReference>
<dbReference type="Proteomes" id="UP000694905">
    <property type="component" value="Unplaced"/>
</dbReference>
<dbReference type="GO" id="GO:0005634">
    <property type="term" value="C:nucleus"/>
    <property type="evidence" value="ECO:0007669"/>
    <property type="project" value="UniProtKB-SubCell"/>
</dbReference>
<dbReference type="GO" id="GO:0003677">
    <property type="term" value="F:DNA binding"/>
    <property type="evidence" value="ECO:0007669"/>
    <property type="project" value="UniProtKB-KW"/>
</dbReference>
<dbReference type="GO" id="GO:0000981">
    <property type="term" value="F:DNA-binding transcription factor activity, RNA polymerase II-specific"/>
    <property type="evidence" value="ECO:0007669"/>
    <property type="project" value="TreeGrafter"/>
</dbReference>
<dbReference type="GO" id="GO:0008270">
    <property type="term" value="F:zinc ion binding"/>
    <property type="evidence" value="ECO:0007669"/>
    <property type="project" value="UniProtKB-KW"/>
</dbReference>
<dbReference type="GO" id="GO:0035282">
    <property type="term" value="P:segmentation"/>
    <property type="evidence" value="ECO:0007669"/>
    <property type="project" value="UniProtKB-KW"/>
</dbReference>
<dbReference type="FunFam" id="3.30.160.60:FF:002343">
    <property type="entry name" value="Zinc finger protein 33A"/>
    <property type="match status" value="1"/>
</dbReference>
<dbReference type="FunFam" id="3.30.160.60:FF:001954">
    <property type="entry name" value="Zinc finger protein 787"/>
    <property type="match status" value="1"/>
</dbReference>
<dbReference type="Gene3D" id="3.30.160.60">
    <property type="entry name" value="Classic Zinc Finger"/>
    <property type="match status" value="3"/>
</dbReference>
<dbReference type="InterPro" id="IPR036236">
    <property type="entry name" value="Znf_C2H2_sf"/>
</dbReference>
<dbReference type="InterPro" id="IPR013087">
    <property type="entry name" value="Znf_C2H2_type"/>
</dbReference>
<dbReference type="PANTHER" id="PTHR24394:SF29">
    <property type="entry name" value="MYONEURIN"/>
    <property type="match status" value="1"/>
</dbReference>
<dbReference type="PANTHER" id="PTHR24394">
    <property type="entry name" value="ZINC FINGER PROTEIN"/>
    <property type="match status" value="1"/>
</dbReference>
<dbReference type="Pfam" id="PF00096">
    <property type="entry name" value="zf-C2H2"/>
    <property type="match status" value="2"/>
</dbReference>
<dbReference type="SMART" id="SM00355">
    <property type="entry name" value="ZnF_C2H2"/>
    <property type="match status" value="2"/>
</dbReference>
<dbReference type="SUPFAM" id="SSF57667">
    <property type="entry name" value="beta-beta-alpha zinc fingers"/>
    <property type="match status" value="1"/>
</dbReference>
<dbReference type="PROSITE" id="PS00028">
    <property type="entry name" value="ZINC_FINGER_C2H2_1"/>
    <property type="match status" value="2"/>
</dbReference>
<dbReference type="PROSITE" id="PS50157">
    <property type="entry name" value="ZINC_FINGER_C2H2_2"/>
    <property type="match status" value="2"/>
</dbReference>